<accession>O83243</accession>
<protein>
    <recommendedName>
        <fullName evidence="1">Large ribosomal subunit protein bL17</fullName>
    </recommendedName>
    <alternativeName>
        <fullName evidence="3">50S ribosomal protein L17</fullName>
    </alternativeName>
</protein>
<sequence>MRHRTGFNPLSCMAAHRRALRRNMVTSLFKFERITTTKPKAAEVRRAAERLITRSKSDSVHNRRQVARFIWDKAVLHKLFADIGPRMREREGGYTRILKLGLRQGDAAHVVVLELVDYTFEKSLKKRARTDSVPARKGAGKKDASRVSGTVPDGQSQKIGKKKE</sequence>
<gene>
    <name evidence="1" type="primary">rplQ</name>
    <name type="ordered locus">TP_0213</name>
</gene>
<comment type="subunit">
    <text evidence="1">Part of the 50S ribosomal subunit. Contacts protein L32.</text>
</comment>
<comment type="similarity">
    <text evidence="1">Belongs to the bacterial ribosomal protein bL17 family.</text>
</comment>
<organism>
    <name type="scientific">Treponema pallidum (strain Nichols)</name>
    <dbReference type="NCBI Taxonomy" id="243276"/>
    <lineage>
        <taxon>Bacteria</taxon>
        <taxon>Pseudomonadati</taxon>
        <taxon>Spirochaetota</taxon>
        <taxon>Spirochaetia</taxon>
        <taxon>Spirochaetales</taxon>
        <taxon>Treponemataceae</taxon>
        <taxon>Treponema</taxon>
    </lineage>
</organism>
<feature type="chain" id="PRO_0000175548" description="Large ribosomal subunit protein bL17">
    <location>
        <begin position="1"/>
        <end position="164"/>
    </location>
</feature>
<feature type="region of interest" description="Disordered" evidence="2">
    <location>
        <begin position="127"/>
        <end position="164"/>
    </location>
</feature>
<keyword id="KW-1185">Reference proteome</keyword>
<keyword id="KW-0687">Ribonucleoprotein</keyword>
<keyword id="KW-0689">Ribosomal protein</keyword>
<dbReference type="EMBL" id="AE000520">
    <property type="protein sequence ID" value="AAC65202.1"/>
    <property type="molecule type" value="Genomic_DNA"/>
</dbReference>
<dbReference type="PIR" id="C71352">
    <property type="entry name" value="C71352"/>
</dbReference>
<dbReference type="RefSeq" id="WP_010881661.1">
    <property type="nucleotide sequence ID" value="NC_021490.2"/>
</dbReference>
<dbReference type="SMR" id="O83243"/>
<dbReference type="IntAct" id="O83243">
    <property type="interactions" value="1"/>
</dbReference>
<dbReference type="STRING" id="243276.TP_0213"/>
<dbReference type="EnsemblBacteria" id="AAC65202">
    <property type="protein sequence ID" value="AAC65202"/>
    <property type="gene ID" value="TP_0213"/>
</dbReference>
<dbReference type="GeneID" id="93876001"/>
<dbReference type="KEGG" id="tpa:TP_0213"/>
<dbReference type="KEGG" id="tpw:TPANIC_0213"/>
<dbReference type="eggNOG" id="COG0203">
    <property type="taxonomic scope" value="Bacteria"/>
</dbReference>
<dbReference type="HOGENOM" id="CLU_074407_0_1_12"/>
<dbReference type="OrthoDB" id="9809073at2"/>
<dbReference type="Proteomes" id="UP000000811">
    <property type="component" value="Chromosome"/>
</dbReference>
<dbReference type="GO" id="GO:0022625">
    <property type="term" value="C:cytosolic large ribosomal subunit"/>
    <property type="evidence" value="ECO:0007669"/>
    <property type="project" value="TreeGrafter"/>
</dbReference>
<dbReference type="GO" id="GO:0003735">
    <property type="term" value="F:structural constituent of ribosome"/>
    <property type="evidence" value="ECO:0007669"/>
    <property type="project" value="InterPro"/>
</dbReference>
<dbReference type="GO" id="GO:0006412">
    <property type="term" value="P:translation"/>
    <property type="evidence" value="ECO:0007669"/>
    <property type="project" value="UniProtKB-UniRule"/>
</dbReference>
<dbReference type="Gene3D" id="3.90.1030.10">
    <property type="entry name" value="Ribosomal protein L17"/>
    <property type="match status" value="1"/>
</dbReference>
<dbReference type="HAMAP" id="MF_01368">
    <property type="entry name" value="Ribosomal_bL17"/>
    <property type="match status" value="1"/>
</dbReference>
<dbReference type="InterPro" id="IPR000456">
    <property type="entry name" value="Ribosomal_bL17"/>
</dbReference>
<dbReference type="InterPro" id="IPR047859">
    <property type="entry name" value="Ribosomal_bL17_CS"/>
</dbReference>
<dbReference type="InterPro" id="IPR036373">
    <property type="entry name" value="Ribosomal_bL17_sf"/>
</dbReference>
<dbReference type="NCBIfam" id="TIGR00059">
    <property type="entry name" value="L17"/>
    <property type="match status" value="1"/>
</dbReference>
<dbReference type="PANTHER" id="PTHR14413:SF16">
    <property type="entry name" value="LARGE RIBOSOMAL SUBUNIT PROTEIN BL17M"/>
    <property type="match status" value="1"/>
</dbReference>
<dbReference type="PANTHER" id="PTHR14413">
    <property type="entry name" value="RIBOSOMAL PROTEIN L17"/>
    <property type="match status" value="1"/>
</dbReference>
<dbReference type="Pfam" id="PF01196">
    <property type="entry name" value="Ribosomal_L17"/>
    <property type="match status" value="1"/>
</dbReference>
<dbReference type="SUPFAM" id="SSF64263">
    <property type="entry name" value="Prokaryotic ribosomal protein L17"/>
    <property type="match status" value="1"/>
</dbReference>
<dbReference type="PROSITE" id="PS01167">
    <property type="entry name" value="RIBOSOMAL_L17"/>
    <property type="match status" value="1"/>
</dbReference>
<name>RL17_TREPA</name>
<evidence type="ECO:0000255" key="1">
    <source>
        <dbReference type="HAMAP-Rule" id="MF_01368"/>
    </source>
</evidence>
<evidence type="ECO:0000256" key="2">
    <source>
        <dbReference type="SAM" id="MobiDB-lite"/>
    </source>
</evidence>
<evidence type="ECO:0000305" key="3"/>
<reference key="1">
    <citation type="journal article" date="1998" name="Science">
        <title>Complete genome sequence of Treponema pallidum, the syphilis spirochete.</title>
        <authorList>
            <person name="Fraser C.M."/>
            <person name="Norris S.J."/>
            <person name="Weinstock G.M."/>
            <person name="White O."/>
            <person name="Sutton G.G."/>
            <person name="Dodson R.J."/>
            <person name="Gwinn M.L."/>
            <person name="Hickey E.K."/>
            <person name="Clayton R.A."/>
            <person name="Ketchum K.A."/>
            <person name="Sodergren E."/>
            <person name="Hardham J.M."/>
            <person name="McLeod M.P."/>
            <person name="Salzberg S.L."/>
            <person name="Peterson J.D."/>
            <person name="Khalak H.G."/>
            <person name="Richardson D.L."/>
            <person name="Howell J.K."/>
            <person name="Chidambaram M."/>
            <person name="Utterback T.R."/>
            <person name="McDonald L.A."/>
            <person name="Artiach P."/>
            <person name="Bowman C."/>
            <person name="Cotton M.D."/>
            <person name="Fujii C."/>
            <person name="Garland S.A."/>
            <person name="Hatch B."/>
            <person name="Horst K."/>
            <person name="Roberts K.M."/>
            <person name="Sandusky M."/>
            <person name="Weidman J.F."/>
            <person name="Smith H.O."/>
            <person name="Venter J.C."/>
        </authorList>
    </citation>
    <scope>NUCLEOTIDE SEQUENCE [LARGE SCALE GENOMIC DNA]</scope>
    <source>
        <strain>Nichols</strain>
    </source>
</reference>
<proteinExistence type="inferred from homology"/>